<proteinExistence type="evidence at transcript level"/>
<protein>
    <recommendedName>
        <fullName evidence="2">Kidney mitochondrial carrier protein 1</fullName>
    </recommendedName>
    <alternativeName>
        <fullName>Solute carrier family 25 member 30</fullName>
    </alternativeName>
</protein>
<comment type="function">
    <text evidence="1">Probable transporter.</text>
</comment>
<comment type="function">
    <text evidence="1 2">Antiporter that transports inorganic anions (sulfate, sulfite, thiosulfate and phosphate) and, to a lesser extent, a variety of dicarboxylates (e.g. malonate, malate and citramalate) and, even more so, aspartate. The sulfate/sulfate exchange is much higher than the phosphate/phosphate and malate/malate exchanges. The transport affinities is higher for sulfate and thiosulfate than for any other substrate. May catalyze the export of sulfite and thiosulfate (the hydrogen sulfide degradation products) from the mitochondria, thereby modulating the level of the hydrogen sulfide. Also may mediate a very low unidirectional transport of sulfate, phosphate and (S)-malate.</text>
</comment>
<comment type="catalytic activity">
    <reaction evidence="2">
        <text>sulfite(in) + sulfate(out) = sulfite(out) + sulfate(in)</text>
        <dbReference type="Rhea" id="RHEA:73207"/>
        <dbReference type="ChEBI" id="CHEBI:16189"/>
        <dbReference type="ChEBI" id="CHEBI:17359"/>
    </reaction>
</comment>
<comment type="catalytic activity">
    <reaction evidence="2">
        <text>thiosulfate(in) + sulfate(out) = thiosulfate(out) + sulfate(in)</text>
        <dbReference type="Rhea" id="RHEA:73215"/>
        <dbReference type="ChEBI" id="CHEBI:16189"/>
        <dbReference type="ChEBI" id="CHEBI:33542"/>
    </reaction>
</comment>
<comment type="catalytic activity">
    <reaction evidence="2">
        <text>sulfate(out) + phosphate(in) = sulfate(in) + phosphate(out)</text>
        <dbReference type="Rhea" id="RHEA:71631"/>
        <dbReference type="ChEBI" id="CHEBI:16189"/>
        <dbReference type="ChEBI" id="CHEBI:43474"/>
    </reaction>
</comment>
<comment type="catalytic activity">
    <reaction evidence="2">
        <text>oxalate(in) + sulfate(out) = oxalate(out) + sulfate(in)</text>
        <dbReference type="Rhea" id="RHEA:72275"/>
        <dbReference type="ChEBI" id="CHEBI:16189"/>
        <dbReference type="ChEBI" id="CHEBI:30623"/>
    </reaction>
</comment>
<comment type="catalytic activity">
    <reaction evidence="2">
        <text>malonate(in) + sulfate(out) = malonate(out) + sulfate(in)</text>
        <dbReference type="Rhea" id="RHEA:73195"/>
        <dbReference type="ChEBI" id="CHEBI:15792"/>
        <dbReference type="ChEBI" id="CHEBI:16189"/>
    </reaction>
</comment>
<comment type="catalytic activity">
    <reaction evidence="2">
        <text>maleate(in) + sulfate(out) = maleate(out) + sulfate(in)</text>
        <dbReference type="Rhea" id="RHEA:73199"/>
        <dbReference type="ChEBI" id="CHEBI:16189"/>
        <dbReference type="ChEBI" id="CHEBI:30780"/>
    </reaction>
</comment>
<comment type="catalytic activity">
    <reaction evidence="2">
        <text>(S)-malate(in) + sulfate(out) = (S)-malate(out) + sulfate(in)</text>
        <dbReference type="Rhea" id="RHEA:71615"/>
        <dbReference type="ChEBI" id="CHEBI:15589"/>
        <dbReference type="ChEBI" id="CHEBI:16189"/>
    </reaction>
</comment>
<comment type="catalytic activity">
    <reaction evidence="2">
        <text>(3S)-citramalate(in) + sulfate(out) = (3S)-citramalate(out) + sulfate(in)</text>
        <dbReference type="Rhea" id="RHEA:73223"/>
        <dbReference type="ChEBI" id="CHEBI:16189"/>
        <dbReference type="ChEBI" id="CHEBI:30936"/>
    </reaction>
</comment>
<comment type="catalytic activity">
    <reaction evidence="2">
        <text>(3R)-citramalate(in) + sulfate(out) = (3R)-citramalate(out) + sulfate(in)</text>
        <dbReference type="Rhea" id="RHEA:73227"/>
        <dbReference type="ChEBI" id="CHEBI:16189"/>
        <dbReference type="ChEBI" id="CHEBI:30934"/>
    </reaction>
</comment>
<comment type="catalytic activity">
    <reaction evidence="2">
        <text>sulfate(out) + succinate(in) = sulfate(in) + succinate(out)</text>
        <dbReference type="Rhea" id="RHEA:73411"/>
        <dbReference type="ChEBI" id="CHEBI:16189"/>
        <dbReference type="ChEBI" id="CHEBI:30031"/>
    </reaction>
</comment>
<comment type="catalytic activity">
    <reaction evidence="2">
        <text>(S,S)-tartrate(in) + sulfate(out) = (S,S)-tartrate(out) + sulfate(in)</text>
        <dbReference type="Rhea" id="RHEA:73407"/>
        <dbReference type="ChEBI" id="CHEBI:16189"/>
        <dbReference type="ChEBI" id="CHEBI:30927"/>
    </reaction>
</comment>
<comment type="catalytic activity">
    <reaction evidence="2">
        <text>(2R,3R)-tartrate(in) + sulfate(out) = (2R,3R)-tartrate(out) + sulfate(in)</text>
        <dbReference type="Rhea" id="RHEA:73403"/>
        <dbReference type="ChEBI" id="CHEBI:16189"/>
        <dbReference type="ChEBI" id="CHEBI:30924"/>
    </reaction>
</comment>
<comment type="catalytic activity">
    <reaction evidence="2">
        <text>D-aspartate(in) + sulfate(out) = D-aspartate(out) + sulfate(in)</text>
        <dbReference type="Rhea" id="RHEA:73399"/>
        <dbReference type="ChEBI" id="CHEBI:16189"/>
        <dbReference type="ChEBI" id="CHEBI:29990"/>
    </reaction>
</comment>
<comment type="catalytic activity">
    <reaction evidence="2">
        <text>L-aspartate(in) + sulfate(out) = L-aspartate(out) + sulfate(in)</text>
        <dbReference type="Rhea" id="RHEA:73395"/>
        <dbReference type="ChEBI" id="CHEBI:16189"/>
        <dbReference type="ChEBI" id="CHEBI:29991"/>
    </reaction>
</comment>
<comment type="catalytic activity">
    <reaction evidence="2">
        <text>sulfate(in) = sulfate(out)</text>
        <dbReference type="Rhea" id="RHEA:34983"/>
        <dbReference type="ChEBI" id="CHEBI:16189"/>
    </reaction>
</comment>
<comment type="catalytic activity">
    <reaction evidence="2">
        <text>phosphate(in) = phosphate(out)</text>
        <dbReference type="Rhea" id="RHEA:32823"/>
        <dbReference type="ChEBI" id="CHEBI:43474"/>
    </reaction>
</comment>
<comment type="catalytic activity">
    <reaction evidence="2">
        <text>(S)-malate(out) = (S)-malate(in)</text>
        <dbReference type="Rhea" id="RHEA:74555"/>
        <dbReference type="ChEBI" id="CHEBI:15589"/>
    </reaction>
</comment>
<comment type="subcellular location">
    <subcellularLocation>
        <location evidence="3">Mitochondrion inner membrane</location>
        <topology evidence="4">Multi-pass membrane protein</topology>
    </subcellularLocation>
</comment>
<comment type="similarity">
    <text evidence="5">Belongs to the mitochondrial carrier (TC 2.A.29) family.</text>
</comment>
<keyword id="KW-0472">Membrane</keyword>
<keyword id="KW-0496">Mitochondrion</keyword>
<keyword id="KW-0999">Mitochondrion inner membrane</keyword>
<keyword id="KW-1185">Reference proteome</keyword>
<keyword id="KW-0677">Repeat</keyword>
<keyword id="KW-0812">Transmembrane</keyword>
<keyword id="KW-1133">Transmembrane helix</keyword>
<keyword id="KW-0813">Transport</keyword>
<gene>
    <name evidence="2" type="primary">slc25a30</name>
    <name type="synonym">kmcp1</name>
</gene>
<dbReference type="EMBL" id="BC072926">
    <property type="protein sequence ID" value="AAH72926.1"/>
    <property type="molecule type" value="mRNA"/>
</dbReference>
<dbReference type="SMR" id="Q6GQ22"/>
<dbReference type="Proteomes" id="UP000186698">
    <property type="component" value="Unplaced"/>
</dbReference>
<dbReference type="GO" id="GO:0005743">
    <property type="term" value="C:mitochondrial inner membrane"/>
    <property type="evidence" value="ECO:0007669"/>
    <property type="project" value="UniProtKB-SubCell"/>
</dbReference>
<dbReference type="GO" id="GO:0005452">
    <property type="term" value="F:solute:inorganic anion antiporter activity"/>
    <property type="evidence" value="ECO:0000250"/>
    <property type="project" value="UniProtKB"/>
</dbReference>
<dbReference type="GO" id="GO:0022857">
    <property type="term" value="F:transmembrane transporter activity"/>
    <property type="evidence" value="ECO:0000318"/>
    <property type="project" value="GO_Central"/>
</dbReference>
<dbReference type="GO" id="GO:0015698">
    <property type="term" value="P:inorganic anion transport"/>
    <property type="evidence" value="ECO:0000250"/>
    <property type="project" value="UniProtKB"/>
</dbReference>
<dbReference type="FunFam" id="1.50.40.10:FF:000006">
    <property type="entry name" value="brain mitochondrial carrier protein 1 isoform X1"/>
    <property type="match status" value="1"/>
</dbReference>
<dbReference type="Gene3D" id="1.50.40.10">
    <property type="entry name" value="Mitochondrial carrier domain"/>
    <property type="match status" value="1"/>
</dbReference>
<dbReference type="InterPro" id="IPR002067">
    <property type="entry name" value="Mit_carrier"/>
</dbReference>
<dbReference type="InterPro" id="IPR050391">
    <property type="entry name" value="Mito_Metabolite_Transporter"/>
</dbReference>
<dbReference type="InterPro" id="IPR018108">
    <property type="entry name" value="Mitochondrial_sb/sol_carrier"/>
</dbReference>
<dbReference type="InterPro" id="IPR023395">
    <property type="entry name" value="Mt_carrier_dom_sf"/>
</dbReference>
<dbReference type="PANTHER" id="PTHR45618">
    <property type="entry name" value="MITOCHONDRIAL DICARBOXYLATE CARRIER-RELATED"/>
    <property type="match status" value="1"/>
</dbReference>
<dbReference type="Pfam" id="PF00153">
    <property type="entry name" value="Mito_carr"/>
    <property type="match status" value="3"/>
</dbReference>
<dbReference type="PRINTS" id="PR00784">
    <property type="entry name" value="MTUNCOUPLING"/>
</dbReference>
<dbReference type="SUPFAM" id="SSF103506">
    <property type="entry name" value="Mitochondrial carrier"/>
    <property type="match status" value="1"/>
</dbReference>
<dbReference type="PROSITE" id="PS50920">
    <property type="entry name" value="SOLCAR"/>
    <property type="match status" value="3"/>
</dbReference>
<feature type="chain" id="PRO_0000288920" description="Kidney mitochondrial carrier protein 1">
    <location>
        <begin position="1"/>
        <end position="291"/>
    </location>
</feature>
<feature type="transmembrane region" description="Helical; Name=1" evidence="4">
    <location>
        <begin position="9"/>
        <end position="26"/>
    </location>
</feature>
<feature type="transmembrane region" description="Helical; Name=2" evidence="4">
    <location>
        <begin position="71"/>
        <end position="89"/>
    </location>
</feature>
<feature type="transmembrane region" description="Helical; Name=3" evidence="4">
    <location>
        <begin position="106"/>
        <end position="124"/>
    </location>
</feature>
<feature type="transmembrane region" description="Helical; Name=4" evidence="4">
    <location>
        <begin position="164"/>
        <end position="183"/>
    </location>
</feature>
<feature type="transmembrane region" description="Helical; Name=5" evidence="4">
    <location>
        <begin position="204"/>
        <end position="224"/>
    </location>
</feature>
<feature type="transmembrane region" description="Helical; Name=6" evidence="4">
    <location>
        <begin position="264"/>
        <end position="283"/>
    </location>
</feature>
<feature type="repeat" description="Solcar 1">
    <location>
        <begin position="7"/>
        <end position="96"/>
    </location>
</feature>
<feature type="repeat" description="Solcar 2">
    <location>
        <begin position="104"/>
        <end position="189"/>
    </location>
</feature>
<feature type="repeat" description="Solcar 3">
    <location>
        <begin position="198"/>
        <end position="289"/>
    </location>
</feature>
<evidence type="ECO:0000250" key="1"/>
<evidence type="ECO:0000250" key="2">
    <source>
        <dbReference type="UniProtKB" id="Q5SVS4"/>
    </source>
</evidence>
<evidence type="ECO:0000250" key="3">
    <source>
        <dbReference type="UniProtKB" id="Q9CR58"/>
    </source>
</evidence>
<evidence type="ECO:0000255" key="4"/>
<evidence type="ECO:0000305" key="5"/>
<accession>Q6GQ22</accession>
<reference key="1">
    <citation type="submission" date="2004-06" db="EMBL/GenBank/DDBJ databases">
        <authorList>
            <consortium name="NIH - Xenopus Gene Collection (XGC) project"/>
        </authorList>
    </citation>
    <scope>NUCLEOTIDE SEQUENCE [LARGE SCALE MRNA]</scope>
    <source>
        <tissue>Embryo</tissue>
    </source>
</reference>
<name>KMCP1_XENLA</name>
<organism>
    <name type="scientific">Xenopus laevis</name>
    <name type="common">African clawed frog</name>
    <dbReference type="NCBI Taxonomy" id="8355"/>
    <lineage>
        <taxon>Eukaryota</taxon>
        <taxon>Metazoa</taxon>
        <taxon>Chordata</taxon>
        <taxon>Craniata</taxon>
        <taxon>Vertebrata</taxon>
        <taxon>Euteleostomi</taxon>
        <taxon>Amphibia</taxon>
        <taxon>Batrachia</taxon>
        <taxon>Anura</taxon>
        <taxon>Pipoidea</taxon>
        <taxon>Pipidae</taxon>
        <taxon>Xenopodinae</taxon>
        <taxon>Xenopus</taxon>
        <taxon>Xenopus</taxon>
    </lineage>
</organism>
<sequence>MTALNWKPFIYGGLASITAECGTFPIDLTKTRLQVQGQPNDAKYKEIRYRGMMHAIVRIWREEGVKALYSGIAPAMLRQASYGTIKIGTYQSLKRLFVDCPEDETLVLNAFCGVLSGVVSSCIANPTDVLKIRMQAQGNVMQGGMIVNFINIYQQEGTRGLWKGVSLTAQRAAIVVGVELPVYDITKKHLILSGLMGDTVYTHFLSSFTCGLAGALASNPVDVVRTRMMNQRSIRDASNSSYKGTLDCLLQTWKNEGFFALYKGFWPNWLRLGPWNIIFFITYEQLKKLNL</sequence>